<evidence type="ECO:0000255" key="1">
    <source>
        <dbReference type="HAMAP-Rule" id="MF_00816"/>
    </source>
</evidence>
<gene>
    <name evidence="1" type="primary">yejL</name>
    <name type="ordered locus">SeD_A2578</name>
</gene>
<accession>B5FNN3</accession>
<proteinExistence type="inferred from homology"/>
<reference key="1">
    <citation type="journal article" date="2011" name="J. Bacteriol.">
        <title>Comparative genomics of 28 Salmonella enterica isolates: evidence for CRISPR-mediated adaptive sublineage evolution.</title>
        <authorList>
            <person name="Fricke W.F."/>
            <person name="Mammel M.K."/>
            <person name="McDermott P.F."/>
            <person name="Tartera C."/>
            <person name="White D.G."/>
            <person name="Leclerc J.E."/>
            <person name="Ravel J."/>
            <person name="Cebula T.A."/>
        </authorList>
    </citation>
    <scope>NUCLEOTIDE SEQUENCE [LARGE SCALE GENOMIC DNA]</scope>
    <source>
        <strain>CT_02021853</strain>
    </source>
</reference>
<protein>
    <recommendedName>
        <fullName evidence="1">UPF0352 protein YejL</fullName>
    </recommendedName>
</protein>
<comment type="similarity">
    <text evidence="1">Belongs to the UPF0352 family.</text>
</comment>
<feature type="chain" id="PRO_1000199594" description="UPF0352 protein YejL">
    <location>
        <begin position="1"/>
        <end position="75"/>
    </location>
</feature>
<sequence>MPQLSRYSDEHVEQLLSELLSVLEKHKAPTDLSLMVLGNMVTNLINTSVAPAQRQAIANSFARALQSSISEDNAH</sequence>
<dbReference type="EMBL" id="CP001144">
    <property type="protein sequence ID" value="ACH77315.1"/>
    <property type="molecule type" value="Genomic_DNA"/>
</dbReference>
<dbReference type="RefSeq" id="WP_001135904.1">
    <property type="nucleotide sequence ID" value="NC_011205.1"/>
</dbReference>
<dbReference type="SMR" id="B5FNN3"/>
<dbReference type="KEGG" id="sed:SeD_A2578"/>
<dbReference type="HOGENOM" id="CLU_175457_0_0_6"/>
<dbReference type="Proteomes" id="UP000008322">
    <property type="component" value="Chromosome"/>
</dbReference>
<dbReference type="Gene3D" id="1.10.3390.10">
    <property type="entry name" value="YejL-like"/>
    <property type="match status" value="1"/>
</dbReference>
<dbReference type="HAMAP" id="MF_00816">
    <property type="entry name" value="UPF0352"/>
    <property type="match status" value="1"/>
</dbReference>
<dbReference type="InterPro" id="IPR009857">
    <property type="entry name" value="UPF0352"/>
</dbReference>
<dbReference type="InterPro" id="IPR023202">
    <property type="entry name" value="YejL_sf"/>
</dbReference>
<dbReference type="NCBIfam" id="NF010242">
    <property type="entry name" value="PRK13689.1"/>
    <property type="match status" value="1"/>
</dbReference>
<dbReference type="Pfam" id="PF07208">
    <property type="entry name" value="DUF1414"/>
    <property type="match status" value="1"/>
</dbReference>
<dbReference type="PIRSF" id="PIRSF006188">
    <property type="entry name" value="UCP006188"/>
    <property type="match status" value="1"/>
</dbReference>
<dbReference type="SUPFAM" id="SSF158651">
    <property type="entry name" value="YejL-like"/>
    <property type="match status" value="1"/>
</dbReference>
<organism>
    <name type="scientific">Salmonella dublin (strain CT_02021853)</name>
    <dbReference type="NCBI Taxonomy" id="439851"/>
    <lineage>
        <taxon>Bacteria</taxon>
        <taxon>Pseudomonadati</taxon>
        <taxon>Pseudomonadota</taxon>
        <taxon>Gammaproteobacteria</taxon>
        <taxon>Enterobacterales</taxon>
        <taxon>Enterobacteriaceae</taxon>
        <taxon>Salmonella</taxon>
    </lineage>
</organism>
<name>YEJL_SALDC</name>